<proteinExistence type="inferred from homology"/>
<reference key="1">
    <citation type="journal article" date="2004" name="Nat. Genet.">
        <title>Evidence in the Legionella pneumophila genome for exploitation of host cell functions and high genome plasticity.</title>
        <authorList>
            <person name="Cazalet C."/>
            <person name="Rusniok C."/>
            <person name="Brueggemann H."/>
            <person name="Zidane N."/>
            <person name="Magnier A."/>
            <person name="Ma L."/>
            <person name="Tichit M."/>
            <person name="Jarraud S."/>
            <person name="Bouchier C."/>
            <person name="Vandenesch F."/>
            <person name="Kunst F."/>
            <person name="Etienne J."/>
            <person name="Glaser P."/>
            <person name="Buchrieser C."/>
        </authorList>
    </citation>
    <scope>NUCLEOTIDE SEQUENCE [LARGE SCALE GENOMIC DNA]</scope>
    <source>
        <strain>Paris</strain>
    </source>
</reference>
<feature type="chain" id="PRO_0000267887" description="Large ribosomal subunit protein bL17">
    <location>
        <begin position="1"/>
        <end position="127"/>
    </location>
</feature>
<gene>
    <name evidence="1" type="primary">rplQ</name>
    <name type="ordered locus">lpp0420</name>
</gene>
<sequence>MRHRNSGRSFSRTSSHRKAMFSNMCCSLIEHELIRTTLPKAKDLRRYIEPLITVSKSDSVASRRRAFNILRSKSAVGKLFTDLGPRFAKRPGGYIRIIKCGYRDGDNAPMAIVELMDRPVSSDDTEE</sequence>
<comment type="subunit">
    <text evidence="1">Part of the 50S ribosomal subunit. Contacts protein L32.</text>
</comment>
<comment type="similarity">
    <text evidence="1">Belongs to the bacterial ribosomal protein bL17 family.</text>
</comment>
<evidence type="ECO:0000255" key="1">
    <source>
        <dbReference type="HAMAP-Rule" id="MF_01368"/>
    </source>
</evidence>
<evidence type="ECO:0000305" key="2"/>
<dbReference type="EMBL" id="CR628336">
    <property type="protein sequence ID" value="CAH11568.1"/>
    <property type="molecule type" value="Genomic_DNA"/>
</dbReference>
<dbReference type="RefSeq" id="WP_011213015.1">
    <property type="nucleotide sequence ID" value="NC_006368.1"/>
</dbReference>
<dbReference type="SMR" id="Q5X833"/>
<dbReference type="KEGG" id="lpp:lpp0420"/>
<dbReference type="LegioList" id="lpp0420"/>
<dbReference type="HOGENOM" id="CLU_074407_2_0_6"/>
<dbReference type="GO" id="GO:0022625">
    <property type="term" value="C:cytosolic large ribosomal subunit"/>
    <property type="evidence" value="ECO:0007669"/>
    <property type="project" value="TreeGrafter"/>
</dbReference>
<dbReference type="GO" id="GO:0003735">
    <property type="term" value="F:structural constituent of ribosome"/>
    <property type="evidence" value="ECO:0007669"/>
    <property type="project" value="InterPro"/>
</dbReference>
<dbReference type="GO" id="GO:0006412">
    <property type="term" value="P:translation"/>
    <property type="evidence" value="ECO:0007669"/>
    <property type="project" value="UniProtKB-UniRule"/>
</dbReference>
<dbReference type="FunFam" id="3.90.1030.10:FF:000001">
    <property type="entry name" value="50S ribosomal protein L17"/>
    <property type="match status" value="1"/>
</dbReference>
<dbReference type="Gene3D" id="3.90.1030.10">
    <property type="entry name" value="Ribosomal protein L17"/>
    <property type="match status" value="1"/>
</dbReference>
<dbReference type="HAMAP" id="MF_01368">
    <property type="entry name" value="Ribosomal_bL17"/>
    <property type="match status" value="1"/>
</dbReference>
<dbReference type="InterPro" id="IPR000456">
    <property type="entry name" value="Ribosomal_bL17"/>
</dbReference>
<dbReference type="InterPro" id="IPR047859">
    <property type="entry name" value="Ribosomal_bL17_CS"/>
</dbReference>
<dbReference type="InterPro" id="IPR036373">
    <property type="entry name" value="Ribosomal_bL17_sf"/>
</dbReference>
<dbReference type="NCBIfam" id="TIGR00059">
    <property type="entry name" value="L17"/>
    <property type="match status" value="1"/>
</dbReference>
<dbReference type="PANTHER" id="PTHR14413:SF16">
    <property type="entry name" value="LARGE RIBOSOMAL SUBUNIT PROTEIN BL17M"/>
    <property type="match status" value="1"/>
</dbReference>
<dbReference type="PANTHER" id="PTHR14413">
    <property type="entry name" value="RIBOSOMAL PROTEIN L17"/>
    <property type="match status" value="1"/>
</dbReference>
<dbReference type="Pfam" id="PF01196">
    <property type="entry name" value="Ribosomal_L17"/>
    <property type="match status" value="1"/>
</dbReference>
<dbReference type="SUPFAM" id="SSF64263">
    <property type="entry name" value="Prokaryotic ribosomal protein L17"/>
    <property type="match status" value="1"/>
</dbReference>
<dbReference type="PROSITE" id="PS01167">
    <property type="entry name" value="RIBOSOMAL_L17"/>
    <property type="match status" value="1"/>
</dbReference>
<organism>
    <name type="scientific">Legionella pneumophila (strain Paris)</name>
    <dbReference type="NCBI Taxonomy" id="297246"/>
    <lineage>
        <taxon>Bacteria</taxon>
        <taxon>Pseudomonadati</taxon>
        <taxon>Pseudomonadota</taxon>
        <taxon>Gammaproteobacteria</taxon>
        <taxon>Legionellales</taxon>
        <taxon>Legionellaceae</taxon>
        <taxon>Legionella</taxon>
    </lineage>
</organism>
<accession>Q5X833</accession>
<protein>
    <recommendedName>
        <fullName evidence="1">Large ribosomal subunit protein bL17</fullName>
    </recommendedName>
    <alternativeName>
        <fullName evidence="2">50S ribosomal protein L17</fullName>
    </alternativeName>
</protein>
<keyword id="KW-0687">Ribonucleoprotein</keyword>
<keyword id="KW-0689">Ribosomal protein</keyword>
<name>RL17_LEGPA</name>